<dbReference type="EMBL" id="J00493">
    <property type="protein sequence ID" value="AAA38128.1"/>
    <property type="molecule type" value="mRNA"/>
</dbReference>
<dbReference type="PIR" id="PH1482">
    <property type="entry name" value="PH1482"/>
</dbReference>
<dbReference type="PIR" id="PH1490">
    <property type="entry name" value="PH1490"/>
</dbReference>
<dbReference type="PIR" id="PH1491">
    <property type="entry name" value="PH1491"/>
</dbReference>
<dbReference type="PIR" id="PH1500">
    <property type="entry name" value="PH1500"/>
</dbReference>
<dbReference type="PIR" id="PH1504">
    <property type="entry name" value="PH1504"/>
</dbReference>
<dbReference type="PIR" id="PH1512">
    <property type="entry name" value="PH1512"/>
</dbReference>
<dbReference type="PIR" id="PH1518">
    <property type="entry name" value="PH1518"/>
</dbReference>
<dbReference type="PIR" id="PH1520">
    <property type="entry name" value="PH1520"/>
</dbReference>
<dbReference type="PIR" id="PH1521">
    <property type="entry name" value="PH1521"/>
</dbReference>
<dbReference type="PIR" id="PH1522">
    <property type="entry name" value="PH1522"/>
</dbReference>
<dbReference type="PIR" id="PH1523">
    <property type="entry name" value="PH1523"/>
</dbReference>
<dbReference type="SMR" id="P01746"/>
<dbReference type="FunCoup" id="P01746">
    <property type="interactions" value="587"/>
</dbReference>
<dbReference type="MINT" id="P01746"/>
<dbReference type="PeptideAtlas" id="P01746"/>
<dbReference type="InParanoid" id="P01746"/>
<dbReference type="Proteomes" id="UP000000589">
    <property type="component" value="Unplaced"/>
</dbReference>
<dbReference type="RNAct" id="P01746">
    <property type="molecule type" value="protein"/>
</dbReference>
<dbReference type="GO" id="GO:0005576">
    <property type="term" value="C:extracellular region"/>
    <property type="evidence" value="ECO:0007669"/>
    <property type="project" value="UniProtKB-ARBA"/>
</dbReference>
<dbReference type="GO" id="GO:0019814">
    <property type="term" value="C:immunoglobulin complex"/>
    <property type="evidence" value="ECO:0007669"/>
    <property type="project" value="UniProtKB-KW"/>
</dbReference>
<dbReference type="GO" id="GO:0003823">
    <property type="term" value="F:antigen binding"/>
    <property type="evidence" value="ECO:0000318"/>
    <property type="project" value="GO_Central"/>
</dbReference>
<dbReference type="GO" id="GO:0016064">
    <property type="term" value="P:immunoglobulin mediated immune response"/>
    <property type="evidence" value="ECO:0000318"/>
    <property type="project" value="GO_Central"/>
</dbReference>
<dbReference type="CDD" id="cd04981">
    <property type="entry name" value="IgV_H"/>
    <property type="match status" value="1"/>
</dbReference>
<dbReference type="FunFam" id="2.60.40.10:FF:001025">
    <property type="entry name" value="Immunoglobulin heavy variable V1-74"/>
    <property type="match status" value="1"/>
</dbReference>
<dbReference type="Gene3D" id="2.60.40.10">
    <property type="entry name" value="Immunoglobulins"/>
    <property type="match status" value="1"/>
</dbReference>
<dbReference type="InterPro" id="IPR007110">
    <property type="entry name" value="Ig-like_dom"/>
</dbReference>
<dbReference type="InterPro" id="IPR036179">
    <property type="entry name" value="Ig-like_dom_sf"/>
</dbReference>
<dbReference type="InterPro" id="IPR013783">
    <property type="entry name" value="Ig-like_fold"/>
</dbReference>
<dbReference type="InterPro" id="IPR003599">
    <property type="entry name" value="Ig_sub"/>
</dbReference>
<dbReference type="InterPro" id="IPR013106">
    <property type="entry name" value="Ig_V-set"/>
</dbReference>
<dbReference type="InterPro" id="IPR050199">
    <property type="entry name" value="IgHV"/>
</dbReference>
<dbReference type="PANTHER" id="PTHR23266">
    <property type="entry name" value="IMMUNOGLOBULIN HEAVY CHAIN"/>
    <property type="match status" value="1"/>
</dbReference>
<dbReference type="Pfam" id="PF07686">
    <property type="entry name" value="V-set"/>
    <property type="match status" value="1"/>
</dbReference>
<dbReference type="SMART" id="SM00409">
    <property type="entry name" value="IG"/>
    <property type="match status" value="1"/>
</dbReference>
<dbReference type="SMART" id="SM00406">
    <property type="entry name" value="IGv"/>
    <property type="match status" value="1"/>
</dbReference>
<dbReference type="SUPFAM" id="SSF48726">
    <property type="entry name" value="Immunoglobulin"/>
    <property type="match status" value="1"/>
</dbReference>
<dbReference type="PROSITE" id="PS50835">
    <property type="entry name" value="IG_LIKE"/>
    <property type="match status" value="1"/>
</dbReference>
<sequence length="140" mass="15514">MGWSFIFLFLLSVTAGVHSEVQLQQSGAELVRAGSSVKMSCKASGYTFTSYGINWVKQRPGQGLEWIGYINPGNGYINYNEKFKGKTTLTVDKSSSTAYMQLRSLTSEDSAVYFCARSHYYGGSYDFDYWGQGTPLTVSS</sequence>
<keyword id="KW-1064">Adaptive immunity</keyword>
<keyword id="KW-0374">Hybridoma</keyword>
<keyword id="KW-0391">Immunity</keyword>
<keyword id="KW-1280">Immunoglobulin</keyword>
<keyword id="KW-1185">Reference proteome</keyword>
<keyword id="KW-0732">Signal</keyword>
<protein>
    <recommendedName>
        <fullName>Ig heavy chain V region 93G7</fullName>
    </recommendedName>
</protein>
<reference key="1">
    <citation type="journal article" date="1982" name="Science">
        <title>Somatic mutation in genes for the variable portion of the immunoglobulin heavy chain.</title>
        <authorList>
            <person name="Sims J."/>
            <person name="Rabbitts T.H."/>
            <person name="Estess P."/>
            <person name="Slaughter C."/>
            <person name="Tucker P.W."/>
            <person name="Capra J.D."/>
        </authorList>
    </citation>
    <scope>NUCLEOTIDE SEQUENCE [MRNA]</scope>
    <source>
        <strain>A/J</strain>
    </source>
</reference>
<feature type="signal peptide">
    <location>
        <begin position="1"/>
        <end position="19"/>
    </location>
</feature>
<feature type="chain" id="PRO_0000015216" description="Ig heavy chain V region 93G7">
    <location>
        <begin position="20"/>
        <end position="140"/>
    </location>
</feature>
<feature type="domain" description="Ig-like">
    <location>
        <begin position="20"/>
        <end position="139"/>
    </location>
</feature>
<feature type="non-terminal residue">
    <location>
        <position position="140"/>
    </location>
</feature>
<accession>P01746</accession>
<proteinExistence type="evidence at transcript level"/>
<organism>
    <name type="scientific">Mus musculus</name>
    <name type="common">Mouse</name>
    <dbReference type="NCBI Taxonomy" id="10090"/>
    <lineage>
        <taxon>Eukaryota</taxon>
        <taxon>Metazoa</taxon>
        <taxon>Chordata</taxon>
        <taxon>Craniata</taxon>
        <taxon>Vertebrata</taxon>
        <taxon>Euteleostomi</taxon>
        <taxon>Mammalia</taxon>
        <taxon>Eutheria</taxon>
        <taxon>Euarchontoglires</taxon>
        <taxon>Glires</taxon>
        <taxon>Rodentia</taxon>
        <taxon>Myomorpha</taxon>
        <taxon>Muroidea</taxon>
        <taxon>Muridae</taxon>
        <taxon>Murinae</taxon>
        <taxon>Mus</taxon>
        <taxon>Mus</taxon>
    </lineage>
</organism>
<name>HVM02_MOUSE</name>